<gene>
    <name type="primary">fliG</name>
    <name type="ordered locus">BB_0290</name>
</gene>
<sequence length="344" mass="39007">MEEKKEKEILDVSALTGKQKAAILLVSIGSEISSKVFKYLSQEEIESLTFEIAKLETITSELKDNVLLEFKELMMAQEFIQKGGIDYARELLEKSLGTQKAVDIINNLGSALQSRPFEFVRRADPANILNFIQQEHPQTIALILSYLDPQKASFILSSLPTEVQTNVARRIALMDRTSPEVVREVERVLEKKLASLSSEDYTSAGGVDNVVEIINMADRKTEKFIIESLEEEDPELAEEIKKKMFVFEDIVLLDDRSIQRVLREIDGQELAKALKSVDIPVQEKIFKNMSKRAASMLKEDMEFLGPTRRKDVEESQQKIVSLIRKLEEQGEIVISRGGEEDVLV</sequence>
<comment type="function">
    <text evidence="1">FliG is one of three proteins (FliG, FliN, FliM) that forms the rotor-mounted switch complex (C ring), located at the base of the basal body. This complex interacts with the CheY and CheZ chemotaxis proteins, in addition to contacting components of the motor that determine the direction of flagellar rotation (By similarity).</text>
</comment>
<comment type="subcellular location">
    <subcellularLocation>
        <location evidence="1">Cell inner membrane</location>
        <topology evidence="1">Peripheral membrane protein</topology>
        <orientation evidence="1">Cytoplasmic side</orientation>
    </subcellularLocation>
    <subcellularLocation>
        <location evidence="1">Bacterial flagellum basal body</location>
    </subcellularLocation>
</comment>
<comment type="similarity">
    <text evidence="2">Belongs to the FliG family.</text>
</comment>
<name>FLIG_BORBU</name>
<keyword id="KW-0975">Bacterial flagellum</keyword>
<keyword id="KW-0997">Cell inner membrane</keyword>
<keyword id="KW-1003">Cell membrane</keyword>
<keyword id="KW-0145">Chemotaxis</keyword>
<keyword id="KW-0283">Flagellar rotation</keyword>
<keyword id="KW-0472">Membrane</keyword>
<keyword id="KW-1185">Reference proteome</keyword>
<proteinExistence type="inferred from homology"/>
<dbReference type="EMBL" id="U43739">
    <property type="protein sequence ID" value="AAA85613.1"/>
    <property type="molecule type" value="Genomic_DNA"/>
</dbReference>
<dbReference type="EMBL" id="AE000783">
    <property type="protein sequence ID" value="AAC66658.1"/>
    <property type="molecule type" value="Genomic_DNA"/>
</dbReference>
<dbReference type="PIR" id="B70136">
    <property type="entry name" value="B70136"/>
</dbReference>
<dbReference type="RefSeq" id="NP_212424.1">
    <property type="nucleotide sequence ID" value="NC_001318.1"/>
</dbReference>
<dbReference type="RefSeq" id="WP_002556889.1">
    <property type="nucleotide sequence ID" value="NC_001318.1"/>
</dbReference>
<dbReference type="SMR" id="P52610"/>
<dbReference type="STRING" id="224326.BB_0290"/>
<dbReference type="PaxDb" id="224326-BB_0290"/>
<dbReference type="EnsemblBacteria" id="AAC66658">
    <property type="protein sequence ID" value="AAC66658"/>
    <property type="gene ID" value="BB_0290"/>
</dbReference>
<dbReference type="GeneID" id="83865762"/>
<dbReference type="KEGG" id="bbu:BB_0290"/>
<dbReference type="PATRIC" id="fig|224326.49.peg.689"/>
<dbReference type="HOGENOM" id="CLU_047835_1_1_12"/>
<dbReference type="OrthoDB" id="9780302at2"/>
<dbReference type="PRO" id="PR:P52610"/>
<dbReference type="Proteomes" id="UP000001807">
    <property type="component" value="Chromosome"/>
</dbReference>
<dbReference type="GO" id="GO:0009425">
    <property type="term" value="C:bacterial-type flagellum basal body"/>
    <property type="evidence" value="ECO:0007669"/>
    <property type="project" value="UniProtKB-SubCell"/>
</dbReference>
<dbReference type="GO" id="GO:0005886">
    <property type="term" value="C:plasma membrane"/>
    <property type="evidence" value="ECO:0007669"/>
    <property type="project" value="UniProtKB-SubCell"/>
</dbReference>
<dbReference type="GO" id="GO:0003774">
    <property type="term" value="F:cytoskeletal motor activity"/>
    <property type="evidence" value="ECO:0007669"/>
    <property type="project" value="InterPro"/>
</dbReference>
<dbReference type="GO" id="GO:0071973">
    <property type="term" value="P:bacterial-type flagellum-dependent cell motility"/>
    <property type="evidence" value="ECO:0007669"/>
    <property type="project" value="InterPro"/>
</dbReference>
<dbReference type="GO" id="GO:0006935">
    <property type="term" value="P:chemotaxis"/>
    <property type="evidence" value="ECO:0007669"/>
    <property type="project" value="UniProtKB-KW"/>
</dbReference>
<dbReference type="FunFam" id="1.10.220.30:FF:000001">
    <property type="entry name" value="Flagellar motor switch protein FliG"/>
    <property type="match status" value="1"/>
</dbReference>
<dbReference type="FunFam" id="1.10.220.30:FF:000005">
    <property type="entry name" value="Flagellar motor switch protein FliG"/>
    <property type="match status" value="1"/>
</dbReference>
<dbReference type="Gene3D" id="1.10.220.30">
    <property type="match status" value="3"/>
</dbReference>
<dbReference type="InterPro" id="IPR000090">
    <property type="entry name" value="Flg_Motor_Flig"/>
</dbReference>
<dbReference type="InterPro" id="IPR023087">
    <property type="entry name" value="Flg_Motor_Flig_C"/>
</dbReference>
<dbReference type="InterPro" id="IPR011002">
    <property type="entry name" value="FliG_a-hlx"/>
</dbReference>
<dbReference type="InterPro" id="IPR032779">
    <property type="entry name" value="FliG_M"/>
</dbReference>
<dbReference type="InterPro" id="IPR028263">
    <property type="entry name" value="FliG_N"/>
</dbReference>
<dbReference type="NCBIfam" id="TIGR00207">
    <property type="entry name" value="fliG"/>
    <property type="match status" value="1"/>
</dbReference>
<dbReference type="PANTHER" id="PTHR30534">
    <property type="entry name" value="FLAGELLAR MOTOR SWITCH PROTEIN FLIG"/>
    <property type="match status" value="1"/>
</dbReference>
<dbReference type="PANTHER" id="PTHR30534:SF0">
    <property type="entry name" value="FLAGELLAR MOTOR SWITCH PROTEIN FLIG"/>
    <property type="match status" value="1"/>
</dbReference>
<dbReference type="Pfam" id="PF01706">
    <property type="entry name" value="FliG_C"/>
    <property type="match status" value="1"/>
</dbReference>
<dbReference type="Pfam" id="PF14841">
    <property type="entry name" value="FliG_M"/>
    <property type="match status" value="1"/>
</dbReference>
<dbReference type="Pfam" id="PF14842">
    <property type="entry name" value="FliG_N"/>
    <property type="match status" value="1"/>
</dbReference>
<dbReference type="PIRSF" id="PIRSF003161">
    <property type="entry name" value="FliG"/>
    <property type="match status" value="1"/>
</dbReference>
<dbReference type="PRINTS" id="PR00954">
    <property type="entry name" value="FLGMOTORFLIG"/>
</dbReference>
<dbReference type="SUPFAM" id="SSF48029">
    <property type="entry name" value="FliG"/>
    <property type="match status" value="2"/>
</dbReference>
<feature type="chain" id="PRO_0000184084" description="Flagellar motor switch protein FliG">
    <location>
        <begin position="1"/>
        <end position="344"/>
    </location>
</feature>
<feature type="short sequence motif" description="Part of the EHPQR-motif">
    <location>
        <begin position="135"/>
        <end position="138"/>
    </location>
</feature>
<feature type="site" description="Part of the EHPQR-motif">
    <location>
        <position position="170"/>
    </location>
</feature>
<accession>P52610</accession>
<evidence type="ECO:0000250" key="1"/>
<evidence type="ECO:0000305" key="2"/>
<reference key="1">
    <citation type="submission" date="1995-12" db="EMBL/GenBank/DDBJ databases">
        <authorList>
            <person name="Dunn J.J."/>
            <person name="Butler-Loffredo L."/>
            <person name="Kieleczawa J."/>
            <person name="Medalle J."/>
            <person name="Luft B.J."/>
        </authorList>
    </citation>
    <scope>NUCLEOTIDE SEQUENCE [GENOMIC DNA]</scope>
    <source>
        <strain>ATCC 35210 / DSM 4680 / CIP 102532 / B31</strain>
    </source>
</reference>
<reference key="2">
    <citation type="journal article" date="1997" name="Nature">
        <title>Genomic sequence of a Lyme disease spirochaete, Borrelia burgdorferi.</title>
        <authorList>
            <person name="Fraser C.M."/>
            <person name="Casjens S."/>
            <person name="Huang W.M."/>
            <person name="Sutton G.G."/>
            <person name="Clayton R.A."/>
            <person name="Lathigra R."/>
            <person name="White O."/>
            <person name="Ketchum K.A."/>
            <person name="Dodson R.J."/>
            <person name="Hickey E.K."/>
            <person name="Gwinn M.L."/>
            <person name="Dougherty B.A."/>
            <person name="Tomb J.-F."/>
            <person name="Fleischmann R.D."/>
            <person name="Richardson D.L."/>
            <person name="Peterson J.D."/>
            <person name="Kerlavage A.R."/>
            <person name="Quackenbush J."/>
            <person name="Salzberg S.L."/>
            <person name="Hanson M."/>
            <person name="van Vugt R."/>
            <person name="Palmer N."/>
            <person name="Adams M.D."/>
            <person name="Gocayne J.D."/>
            <person name="Weidman J.F."/>
            <person name="Utterback T.R."/>
            <person name="Watthey L."/>
            <person name="McDonald L.A."/>
            <person name="Artiach P."/>
            <person name="Bowman C."/>
            <person name="Garland S.A."/>
            <person name="Fujii C."/>
            <person name="Cotton M.D."/>
            <person name="Horst K."/>
            <person name="Roberts K.M."/>
            <person name="Hatch B."/>
            <person name="Smith H.O."/>
            <person name="Venter J.C."/>
        </authorList>
    </citation>
    <scope>NUCLEOTIDE SEQUENCE [LARGE SCALE GENOMIC DNA]</scope>
    <source>
        <strain>ATCC 35210 / DSM 4680 / CIP 102532 / B31</strain>
    </source>
</reference>
<organism>
    <name type="scientific">Borreliella burgdorferi (strain ATCC 35210 / DSM 4680 / CIP 102532 / B31)</name>
    <name type="common">Borrelia burgdorferi</name>
    <dbReference type="NCBI Taxonomy" id="224326"/>
    <lineage>
        <taxon>Bacteria</taxon>
        <taxon>Pseudomonadati</taxon>
        <taxon>Spirochaetota</taxon>
        <taxon>Spirochaetia</taxon>
        <taxon>Spirochaetales</taxon>
        <taxon>Borreliaceae</taxon>
        <taxon>Borreliella</taxon>
    </lineage>
</organism>
<protein>
    <recommendedName>
        <fullName>Flagellar motor switch protein FliG</fullName>
    </recommendedName>
</protein>